<gene>
    <name evidence="1" type="primary">smpB</name>
    <name type="ordered locus">OTBS_0392</name>
</gene>
<keyword id="KW-0963">Cytoplasm</keyword>
<keyword id="KW-1185">Reference proteome</keyword>
<keyword id="KW-0694">RNA-binding</keyword>
<accession>A5CCM6</accession>
<evidence type="ECO:0000255" key="1">
    <source>
        <dbReference type="HAMAP-Rule" id="MF_00023"/>
    </source>
</evidence>
<proteinExistence type="inferred from homology"/>
<sequence>MENYCKIVAQNRKAKFNYFIQDKMEAGIVLQGSELKSIRSGKVSIEDSYAAESSNEIFLYNSYIGEYKQANRFNHVPRRVRKLLLHRKEIQKIIGKLSVQGCTLVALSIYFNSKNKVKVELGLAKGKKQYDKRYAIKEQEWKKQQARIMRNKF</sequence>
<feature type="chain" id="PRO_1000002098" description="SsrA-binding protein">
    <location>
        <begin position="1"/>
        <end position="153"/>
    </location>
</feature>
<dbReference type="EMBL" id="AM494475">
    <property type="protein sequence ID" value="CAM79458.1"/>
    <property type="molecule type" value="Genomic_DNA"/>
</dbReference>
<dbReference type="RefSeq" id="WP_011944452.1">
    <property type="nucleotide sequence ID" value="NC_009488.1"/>
</dbReference>
<dbReference type="SMR" id="A5CCM6"/>
<dbReference type="KEGG" id="ots:OTBS_0392"/>
<dbReference type="eggNOG" id="COG0691">
    <property type="taxonomic scope" value="Bacteria"/>
</dbReference>
<dbReference type="HOGENOM" id="CLU_108953_0_0_5"/>
<dbReference type="Proteomes" id="UP000001565">
    <property type="component" value="Chromosome"/>
</dbReference>
<dbReference type="GO" id="GO:0005829">
    <property type="term" value="C:cytosol"/>
    <property type="evidence" value="ECO:0007669"/>
    <property type="project" value="TreeGrafter"/>
</dbReference>
<dbReference type="GO" id="GO:0003723">
    <property type="term" value="F:RNA binding"/>
    <property type="evidence" value="ECO:0007669"/>
    <property type="project" value="UniProtKB-UniRule"/>
</dbReference>
<dbReference type="GO" id="GO:0070929">
    <property type="term" value="P:trans-translation"/>
    <property type="evidence" value="ECO:0007669"/>
    <property type="project" value="UniProtKB-UniRule"/>
</dbReference>
<dbReference type="CDD" id="cd09294">
    <property type="entry name" value="SmpB"/>
    <property type="match status" value="1"/>
</dbReference>
<dbReference type="Gene3D" id="2.40.280.10">
    <property type="match status" value="1"/>
</dbReference>
<dbReference type="HAMAP" id="MF_00023">
    <property type="entry name" value="SmpB"/>
    <property type="match status" value="1"/>
</dbReference>
<dbReference type="InterPro" id="IPR023620">
    <property type="entry name" value="SmpB"/>
</dbReference>
<dbReference type="InterPro" id="IPR000037">
    <property type="entry name" value="SsrA-bd_prot"/>
</dbReference>
<dbReference type="InterPro" id="IPR020081">
    <property type="entry name" value="SsrA-bd_prot_CS"/>
</dbReference>
<dbReference type="NCBIfam" id="NF003843">
    <property type="entry name" value="PRK05422.1"/>
    <property type="match status" value="1"/>
</dbReference>
<dbReference type="NCBIfam" id="TIGR00086">
    <property type="entry name" value="smpB"/>
    <property type="match status" value="1"/>
</dbReference>
<dbReference type="PANTHER" id="PTHR30308:SF2">
    <property type="entry name" value="SSRA-BINDING PROTEIN"/>
    <property type="match status" value="1"/>
</dbReference>
<dbReference type="PANTHER" id="PTHR30308">
    <property type="entry name" value="TMRNA-BINDING COMPONENT OF TRANS-TRANSLATION TAGGING COMPLEX"/>
    <property type="match status" value="1"/>
</dbReference>
<dbReference type="Pfam" id="PF01668">
    <property type="entry name" value="SmpB"/>
    <property type="match status" value="1"/>
</dbReference>
<dbReference type="SUPFAM" id="SSF74982">
    <property type="entry name" value="Small protein B (SmpB)"/>
    <property type="match status" value="1"/>
</dbReference>
<dbReference type="PROSITE" id="PS01317">
    <property type="entry name" value="SSRP"/>
    <property type="match status" value="1"/>
</dbReference>
<reference key="1">
    <citation type="journal article" date="2007" name="Proc. Natl. Acad. Sci. U.S.A.">
        <title>The Orientia tsutsugamushi genome reveals massive proliferation of conjugative type IV secretion system and host-cell interaction genes.</title>
        <authorList>
            <person name="Cho N.-H."/>
            <person name="Kim H.-R."/>
            <person name="Lee J.-H."/>
            <person name="Kim S.-Y."/>
            <person name="Kim J."/>
            <person name="Cha S."/>
            <person name="Kim S.-Y."/>
            <person name="Darby A.C."/>
            <person name="Fuxelius H.-H."/>
            <person name="Yin J."/>
            <person name="Kim J.H."/>
            <person name="Kim J."/>
            <person name="Lee S.J."/>
            <person name="Koh Y.-S."/>
            <person name="Jang W.-J."/>
            <person name="Park K.-H."/>
            <person name="Andersson S.G.E."/>
            <person name="Choi M.-S."/>
            <person name="Kim I.-S."/>
        </authorList>
    </citation>
    <scope>NUCLEOTIDE SEQUENCE [LARGE SCALE GENOMIC DNA]</scope>
    <source>
        <strain>Boryong</strain>
    </source>
</reference>
<organism>
    <name type="scientific">Orientia tsutsugamushi (strain Boryong)</name>
    <name type="common">Rickettsia tsutsugamushi</name>
    <dbReference type="NCBI Taxonomy" id="357244"/>
    <lineage>
        <taxon>Bacteria</taxon>
        <taxon>Pseudomonadati</taxon>
        <taxon>Pseudomonadota</taxon>
        <taxon>Alphaproteobacteria</taxon>
        <taxon>Rickettsiales</taxon>
        <taxon>Rickettsiaceae</taxon>
        <taxon>Rickettsieae</taxon>
        <taxon>Orientia</taxon>
    </lineage>
</organism>
<name>SSRP_ORITB</name>
<protein>
    <recommendedName>
        <fullName evidence="1">SsrA-binding protein</fullName>
    </recommendedName>
    <alternativeName>
        <fullName evidence="1">Small protein B</fullName>
    </alternativeName>
</protein>
<comment type="function">
    <text evidence="1">Required for rescue of stalled ribosomes mediated by trans-translation. Binds to transfer-messenger RNA (tmRNA), required for stable association of tmRNA with ribosomes. tmRNA and SmpB together mimic tRNA shape, replacing the anticodon stem-loop with SmpB. tmRNA is encoded by the ssrA gene; the 2 termini fold to resemble tRNA(Ala) and it encodes a 'tag peptide', a short internal open reading frame. During trans-translation Ala-aminoacylated tmRNA acts like a tRNA, entering the A-site of stalled ribosomes, displacing the stalled mRNA. The ribosome then switches to translate the ORF on the tmRNA; the nascent peptide is terminated with the 'tag peptide' encoded by the tmRNA and targeted for degradation. The ribosome is freed to recommence translation, which seems to be the essential function of trans-translation.</text>
</comment>
<comment type="subcellular location">
    <subcellularLocation>
        <location evidence="1">Cytoplasm</location>
    </subcellularLocation>
    <text evidence="1">The tmRNA-SmpB complex associates with stalled 70S ribosomes.</text>
</comment>
<comment type="similarity">
    <text evidence="1">Belongs to the SmpB family.</text>
</comment>